<comment type="function">
    <text evidence="1">Plays an important role in the de novo pathway of purine nucleotide biosynthesis. Catalyzes the first committed step in the biosynthesis of AMP from IMP.</text>
</comment>
<comment type="catalytic activity">
    <reaction evidence="1">
        <text>IMP + L-aspartate + GTP = N(6)-(1,2-dicarboxyethyl)-AMP + GDP + phosphate + 2 H(+)</text>
        <dbReference type="Rhea" id="RHEA:15753"/>
        <dbReference type="ChEBI" id="CHEBI:15378"/>
        <dbReference type="ChEBI" id="CHEBI:29991"/>
        <dbReference type="ChEBI" id="CHEBI:37565"/>
        <dbReference type="ChEBI" id="CHEBI:43474"/>
        <dbReference type="ChEBI" id="CHEBI:57567"/>
        <dbReference type="ChEBI" id="CHEBI:58053"/>
        <dbReference type="ChEBI" id="CHEBI:58189"/>
        <dbReference type="EC" id="6.3.4.4"/>
    </reaction>
</comment>
<comment type="cofactor">
    <cofactor evidence="1">
        <name>Mg(2+)</name>
        <dbReference type="ChEBI" id="CHEBI:18420"/>
    </cofactor>
    <text evidence="1">Binds 1 Mg(2+) ion per subunit.</text>
</comment>
<comment type="pathway">
    <text evidence="1">Purine metabolism; AMP biosynthesis via de novo pathway; AMP from IMP: step 1/2.</text>
</comment>
<comment type="subunit">
    <text evidence="1">Homodimer.</text>
</comment>
<comment type="subcellular location">
    <subcellularLocation>
        <location evidence="1">Cytoplasm</location>
    </subcellularLocation>
</comment>
<comment type="similarity">
    <text evidence="1">Belongs to the adenylosuccinate synthetase family.</text>
</comment>
<protein>
    <recommendedName>
        <fullName evidence="1">Adenylosuccinate synthetase</fullName>
        <shortName evidence="1">AMPSase</shortName>
        <shortName evidence="1">AdSS</shortName>
        <ecNumber evidence="1">6.3.4.4</ecNumber>
    </recommendedName>
    <alternativeName>
        <fullName evidence="1">IMP--aspartate ligase</fullName>
    </alternativeName>
</protein>
<accession>O29417</accession>
<keyword id="KW-0963">Cytoplasm</keyword>
<keyword id="KW-0342">GTP-binding</keyword>
<keyword id="KW-0436">Ligase</keyword>
<keyword id="KW-0460">Magnesium</keyword>
<keyword id="KW-0479">Metal-binding</keyword>
<keyword id="KW-0547">Nucleotide-binding</keyword>
<keyword id="KW-0658">Purine biosynthesis</keyword>
<keyword id="KW-1185">Reference proteome</keyword>
<proteinExistence type="inferred from homology"/>
<sequence>MGATIIVGGFWGDEGKGKIVAHVAHSDKPVIIARGGVGPNAGHTVEIDGQKFGVRMIPSGFVYKDAKLLIGAGVLVNPEVFLKEVELLKVGDRARVDYRCAIIEPKHIEADKGSEHLSKKIGTTGTGCGPANVDRVNRVAKQAKDIPELKDYLADVPLEVNQAIENGQFVLIEGSQGFGLSLYYGTYPYVTSKDTTASAIASDVGVGPTRVDDVIVVFKCFPTRVGAGPFPTEMPQEEAEKLGIVEYGTVTGRRRRIGYWDGEFARYSAMVNGATQVAITGVDKLDKECYGVTEWEKLTPKAKKFIEQVEEDVRVPVTLISTGPELKQIIDLRKEKL</sequence>
<reference key="1">
    <citation type="journal article" date="1997" name="Nature">
        <title>The complete genome sequence of the hyperthermophilic, sulphate-reducing archaeon Archaeoglobus fulgidus.</title>
        <authorList>
            <person name="Klenk H.-P."/>
            <person name="Clayton R.A."/>
            <person name="Tomb J.-F."/>
            <person name="White O."/>
            <person name="Nelson K.E."/>
            <person name="Ketchum K.A."/>
            <person name="Dodson R.J."/>
            <person name="Gwinn M.L."/>
            <person name="Hickey E.K."/>
            <person name="Peterson J.D."/>
            <person name="Richardson D.L."/>
            <person name="Kerlavage A.R."/>
            <person name="Graham D.E."/>
            <person name="Kyrpides N.C."/>
            <person name="Fleischmann R.D."/>
            <person name="Quackenbush J."/>
            <person name="Lee N.H."/>
            <person name="Sutton G.G."/>
            <person name="Gill S.R."/>
            <person name="Kirkness E.F."/>
            <person name="Dougherty B.A."/>
            <person name="McKenney K."/>
            <person name="Adams M.D."/>
            <person name="Loftus B.J."/>
            <person name="Peterson S.N."/>
            <person name="Reich C.I."/>
            <person name="McNeil L.K."/>
            <person name="Badger J.H."/>
            <person name="Glodek A."/>
            <person name="Zhou L."/>
            <person name="Overbeek R."/>
            <person name="Gocayne J.D."/>
            <person name="Weidman J.F."/>
            <person name="McDonald L.A."/>
            <person name="Utterback T.R."/>
            <person name="Cotton M.D."/>
            <person name="Spriggs T."/>
            <person name="Artiach P."/>
            <person name="Kaine B.P."/>
            <person name="Sykes S.M."/>
            <person name="Sadow P.W."/>
            <person name="D'Andrea K.P."/>
            <person name="Bowman C."/>
            <person name="Fujii C."/>
            <person name="Garland S.A."/>
            <person name="Mason T.M."/>
            <person name="Olsen G.J."/>
            <person name="Fraser C.M."/>
            <person name="Smith H.O."/>
            <person name="Woese C.R."/>
            <person name="Venter J.C."/>
        </authorList>
    </citation>
    <scope>NUCLEOTIDE SEQUENCE [LARGE SCALE GENOMIC DNA]</scope>
    <source>
        <strain>ATCC 49558 / DSM 4304 / JCM 9628 / NBRC 100126 / VC-16</strain>
    </source>
</reference>
<dbReference type="EC" id="6.3.4.4" evidence="1"/>
<dbReference type="EMBL" id="AE000782">
    <property type="protein sequence ID" value="AAB90398.1"/>
    <property type="molecule type" value="Genomic_DNA"/>
</dbReference>
<dbReference type="PIR" id="A69355">
    <property type="entry name" value="A69355"/>
</dbReference>
<dbReference type="RefSeq" id="WP_010878344.1">
    <property type="nucleotide sequence ID" value="NC_000917.1"/>
</dbReference>
<dbReference type="SMR" id="O29417"/>
<dbReference type="STRING" id="224325.AF_0841"/>
<dbReference type="PaxDb" id="224325-AF_0841"/>
<dbReference type="EnsemblBacteria" id="AAB90398">
    <property type="protein sequence ID" value="AAB90398"/>
    <property type="gene ID" value="AF_0841"/>
</dbReference>
<dbReference type="KEGG" id="afu:AF_0841"/>
<dbReference type="eggNOG" id="arCOG04387">
    <property type="taxonomic scope" value="Archaea"/>
</dbReference>
<dbReference type="HOGENOM" id="CLU_029848_0_0_2"/>
<dbReference type="OrthoDB" id="372247at2157"/>
<dbReference type="PhylomeDB" id="O29417"/>
<dbReference type="UniPathway" id="UPA00075">
    <property type="reaction ID" value="UER00335"/>
</dbReference>
<dbReference type="Proteomes" id="UP000002199">
    <property type="component" value="Chromosome"/>
</dbReference>
<dbReference type="GO" id="GO:0005737">
    <property type="term" value="C:cytoplasm"/>
    <property type="evidence" value="ECO:0007669"/>
    <property type="project" value="UniProtKB-SubCell"/>
</dbReference>
<dbReference type="GO" id="GO:0004019">
    <property type="term" value="F:adenylosuccinate synthase activity"/>
    <property type="evidence" value="ECO:0007669"/>
    <property type="project" value="UniProtKB-UniRule"/>
</dbReference>
<dbReference type="GO" id="GO:0005525">
    <property type="term" value="F:GTP binding"/>
    <property type="evidence" value="ECO:0007669"/>
    <property type="project" value="UniProtKB-UniRule"/>
</dbReference>
<dbReference type="GO" id="GO:0000287">
    <property type="term" value="F:magnesium ion binding"/>
    <property type="evidence" value="ECO:0007669"/>
    <property type="project" value="UniProtKB-UniRule"/>
</dbReference>
<dbReference type="GO" id="GO:0044208">
    <property type="term" value="P:'de novo' AMP biosynthetic process"/>
    <property type="evidence" value="ECO:0007669"/>
    <property type="project" value="UniProtKB-UniRule"/>
</dbReference>
<dbReference type="GO" id="GO:0046040">
    <property type="term" value="P:IMP metabolic process"/>
    <property type="evidence" value="ECO:0007669"/>
    <property type="project" value="TreeGrafter"/>
</dbReference>
<dbReference type="CDD" id="cd03108">
    <property type="entry name" value="AdSS"/>
    <property type="match status" value="1"/>
</dbReference>
<dbReference type="FunFam" id="3.40.440.10:FF:000007">
    <property type="entry name" value="Adenylosuccinate synthetase"/>
    <property type="match status" value="1"/>
</dbReference>
<dbReference type="Gene3D" id="3.40.440.10">
    <property type="entry name" value="Adenylosuccinate Synthetase, subunit A, domain 1"/>
    <property type="match status" value="2"/>
</dbReference>
<dbReference type="Gene3D" id="1.10.300.10">
    <property type="entry name" value="Adenylosuccinate Synthetase, subunit A, domain 2"/>
    <property type="match status" value="1"/>
</dbReference>
<dbReference type="Gene3D" id="3.90.170.10">
    <property type="entry name" value="Adenylosuccinate Synthetase, subunit A, domain 3"/>
    <property type="match status" value="2"/>
</dbReference>
<dbReference type="HAMAP" id="MF_00011">
    <property type="entry name" value="Adenylosucc_synth"/>
    <property type="match status" value="1"/>
</dbReference>
<dbReference type="InterPro" id="IPR018220">
    <property type="entry name" value="Adenylosuccin_syn_GTP-bd"/>
</dbReference>
<dbReference type="InterPro" id="IPR042109">
    <property type="entry name" value="Adenylosuccinate_synth_dom1"/>
</dbReference>
<dbReference type="InterPro" id="IPR042110">
    <property type="entry name" value="Adenylosuccinate_synth_dom2"/>
</dbReference>
<dbReference type="InterPro" id="IPR042111">
    <property type="entry name" value="Adenylosuccinate_synth_dom3"/>
</dbReference>
<dbReference type="InterPro" id="IPR001114">
    <property type="entry name" value="Adenylosuccinate_synthetase"/>
</dbReference>
<dbReference type="InterPro" id="IPR027417">
    <property type="entry name" value="P-loop_NTPase"/>
</dbReference>
<dbReference type="NCBIfam" id="NF003295">
    <property type="entry name" value="PRK04293.1"/>
    <property type="match status" value="1"/>
</dbReference>
<dbReference type="PANTHER" id="PTHR11846">
    <property type="entry name" value="ADENYLOSUCCINATE SYNTHETASE"/>
    <property type="match status" value="1"/>
</dbReference>
<dbReference type="PANTHER" id="PTHR11846:SF0">
    <property type="entry name" value="ADENYLOSUCCINATE SYNTHETASE"/>
    <property type="match status" value="1"/>
</dbReference>
<dbReference type="Pfam" id="PF00709">
    <property type="entry name" value="Adenylsucc_synt"/>
    <property type="match status" value="1"/>
</dbReference>
<dbReference type="SMART" id="SM00788">
    <property type="entry name" value="Adenylsucc_synt"/>
    <property type="match status" value="1"/>
</dbReference>
<dbReference type="SUPFAM" id="SSF52540">
    <property type="entry name" value="P-loop containing nucleoside triphosphate hydrolases"/>
    <property type="match status" value="1"/>
</dbReference>
<dbReference type="PROSITE" id="PS01266">
    <property type="entry name" value="ADENYLOSUCCIN_SYN_1"/>
    <property type="match status" value="1"/>
</dbReference>
<feature type="chain" id="PRO_0000095266" description="Adenylosuccinate synthetase">
    <location>
        <begin position="1"/>
        <end position="337"/>
    </location>
</feature>
<feature type="active site" description="Proton acceptor" evidence="1">
    <location>
        <position position="13"/>
    </location>
</feature>
<feature type="active site" description="Proton donor" evidence="1">
    <location>
        <position position="43"/>
    </location>
</feature>
<feature type="binding site" evidence="1">
    <location>
        <begin position="12"/>
        <end position="18"/>
    </location>
    <ligand>
        <name>GTP</name>
        <dbReference type="ChEBI" id="CHEBI:37565"/>
    </ligand>
</feature>
<feature type="binding site" description="in other chain" evidence="1">
    <location>
        <begin position="13"/>
        <end position="16"/>
    </location>
    <ligand>
        <name>IMP</name>
        <dbReference type="ChEBI" id="CHEBI:58053"/>
        <note>ligand shared between dimeric partners</note>
    </ligand>
</feature>
<feature type="binding site" evidence="1">
    <location>
        <position position="13"/>
    </location>
    <ligand>
        <name>Mg(2+)</name>
        <dbReference type="ChEBI" id="CHEBI:18420"/>
    </ligand>
</feature>
<feature type="binding site" description="in other chain" evidence="1">
    <location>
        <begin position="40"/>
        <end position="43"/>
    </location>
    <ligand>
        <name>IMP</name>
        <dbReference type="ChEBI" id="CHEBI:58053"/>
        <note>ligand shared between dimeric partners</note>
    </ligand>
</feature>
<feature type="binding site" evidence="1">
    <location>
        <begin position="42"/>
        <end position="44"/>
    </location>
    <ligand>
        <name>GTP</name>
        <dbReference type="ChEBI" id="CHEBI:37565"/>
    </ligand>
</feature>
<feature type="binding site" evidence="1">
    <location>
        <position position="42"/>
    </location>
    <ligand>
        <name>Mg(2+)</name>
        <dbReference type="ChEBI" id="CHEBI:18420"/>
    </ligand>
</feature>
<feature type="binding site" description="in other chain" evidence="1">
    <location>
        <position position="124"/>
    </location>
    <ligand>
        <name>IMP</name>
        <dbReference type="ChEBI" id="CHEBI:58053"/>
        <note>ligand shared between dimeric partners</note>
    </ligand>
</feature>
<feature type="binding site" evidence="1">
    <location>
        <position position="138"/>
    </location>
    <ligand>
        <name>IMP</name>
        <dbReference type="ChEBI" id="CHEBI:58053"/>
        <note>ligand shared between dimeric partners</note>
    </ligand>
</feature>
<feature type="binding site" description="in other chain" evidence="1">
    <location>
        <position position="176"/>
    </location>
    <ligand>
        <name>IMP</name>
        <dbReference type="ChEBI" id="CHEBI:58053"/>
        <note>ligand shared between dimeric partners</note>
    </ligand>
</feature>
<feature type="binding site" description="in other chain" evidence="1">
    <location>
        <position position="191"/>
    </location>
    <ligand>
        <name>IMP</name>
        <dbReference type="ChEBI" id="CHEBI:58053"/>
        <note>ligand shared between dimeric partners</note>
    </ligand>
</feature>
<feature type="binding site" evidence="1">
    <location>
        <begin position="249"/>
        <end position="255"/>
    </location>
    <ligand>
        <name>substrate</name>
    </ligand>
</feature>
<feature type="binding site" description="in other chain" evidence="1">
    <location>
        <position position="253"/>
    </location>
    <ligand>
        <name>IMP</name>
        <dbReference type="ChEBI" id="CHEBI:58053"/>
        <note>ligand shared between dimeric partners</note>
    </ligand>
</feature>
<feature type="binding site" evidence="1">
    <location>
        <position position="255"/>
    </location>
    <ligand>
        <name>GTP</name>
        <dbReference type="ChEBI" id="CHEBI:37565"/>
    </ligand>
</feature>
<feature type="binding site" evidence="1">
    <location>
        <begin position="281"/>
        <end position="283"/>
    </location>
    <ligand>
        <name>GTP</name>
        <dbReference type="ChEBI" id="CHEBI:37565"/>
    </ligand>
</feature>
<feature type="binding site" evidence="1">
    <location>
        <begin position="321"/>
        <end position="323"/>
    </location>
    <ligand>
        <name>GTP</name>
        <dbReference type="ChEBI" id="CHEBI:37565"/>
    </ligand>
</feature>
<evidence type="ECO:0000255" key="1">
    <source>
        <dbReference type="HAMAP-Rule" id="MF_00011"/>
    </source>
</evidence>
<name>PURA_ARCFU</name>
<gene>
    <name evidence="1" type="primary">purA</name>
    <name type="ordered locus">AF_0841</name>
</gene>
<organism>
    <name type="scientific">Archaeoglobus fulgidus (strain ATCC 49558 / DSM 4304 / JCM 9628 / NBRC 100126 / VC-16)</name>
    <dbReference type="NCBI Taxonomy" id="224325"/>
    <lineage>
        <taxon>Archaea</taxon>
        <taxon>Methanobacteriati</taxon>
        <taxon>Methanobacteriota</taxon>
        <taxon>Archaeoglobi</taxon>
        <taxon>Archaeoglobales</taxon>
        <taxon>Archaeoglobaceae</taxon>
        <taxon>Archaeoglobus</taxon>
    </lineage>
</organism>